<gene>
    <name type="primary">ZNF264</name>
    <name type="synonym">KIAA0412</name>
</gene>
<protein>
    <recommendedName>
        <fullName>Zinc finger protein 264</fullName>
    </recommendedName>
</protein>
<proteinExistence type="evidence at protein level"/>
<keyword id="KW-0238">DNA-binding</keyword>
<keyword id="KW-1017">Isopeptide bond</keyword>
<keyword id="KW-0479">Metal-binding</keyword>
<keyword id="KW-0539">Nucleus</keyword>
<keyword id="KW-0597">Phosphoprotein</keyword>
<keyword id="KW-1267">Proteomics identification</keyword>
<keyword id="KW-1185">Reference proteome</keyword>
<keyword id="KW-0677">Repeat</keyword>
<keyword id="KW-0804">Transcription</keyword>
<keyword id="KW-0805">Transcription regulation</keyword>
<keyword id="KW-0832">Ubl conjugation</keyword>
<keyword id="KW-0862">Zinc</keyword>
<keyword id="KW-0863">Zinc-finger</keyword>
<feature type="chain" id="PRO_0000047492" description="Zinc finger protein 264">
    <location>
        <begin position="1"/>
        <end position="627"/>
    </location>
</feature>
<feature type="domain" description="KRAB" evidence="2">
    <location>
        <begin position="14"/>
        <end position="85"/>
    </location>
</feature>
<feature type="zinc finger region" description="C2H2-type 1" evidence="1">
    <location>
        <begin position="203"/>
        <end position="225"/>
    </location>
</feature>
<feature type="zinc finger region" description="C2H2-type 2" evidence="1">
    <location>
        <begin position="231"/>
        <end position="253"/>
    </location>
</feature>
<feature type="zinc finger region" description="C2H2-type 3" evidence="1">
    <location>
        <begin position="259"/>
        <end position="281"/>
    </location>
</feature>
<feature type="zinc finger region" description="C2H2-type 4" evidence="1">
    <location>
        <begin position="287"/>
        <end position="309"/>
    </location>
</feature>
<feature type="zinc finger region" description="C2H2-type 5" evidence="1">
    <location>
        <begin position="315"/>
        <end position="337"/>
    </location>
</feature>
<feature type="zinc finger region" description="C2H2-type 6" evidence="1">
    <location>
        <begin position="343"/>
        <end position="365"/>
    </location>
</feature>
<feature type="zinc finger region" description="C2H2-type 7" evidence="1">
    <location>
        <begin position="371"/>
        <end position="393"/>
    </location>
</feature>
<feature type="zinc finger region" description="C2H2-type 8" evidence="1">
    <location>
        <begin position="399"/>
        <end position="421"/>
    </location>
</feature>
<feature type="zinc finger region" description="C2H2-type 9" evidence="1">
    <location>
        <begin position="427"/>
        <end position="449"/>
    </location>
</feature>
<feature type="zinc finger region" description="C2H2-type 10" evidence="1">
    <location>
        <begin position="455"/>
        <end position="477"/>
    </location>
</feature>
<feature type="zinc finger region" description="C2H2-type 11" evidence="1">
    <location>
        <begin position="483"/>
        <end position="505"/>
    </location>
</feature>
<feature type="zinc finger region" description="C2H2-type 12" evidence="1">
    <location>
        <begin position="511"/>
        <end position="533"/>
    </location>
</feature>
<feature type="zinc finger region" description="C2H2-type 13" evidence="1">
    <location>
        <begin position="539"/>
        <end position="561"/>
    </location>
</feature>
<feature type="region of interest" description="Disordered" evidence="3">
    <location>
        <begin position="74"/>
        <end position="155"/>
    </location>
</feature>
<feature type="region of interest" description="Disordered" evidence="3">
    <location>
        <begin position="174"/>
        <end position="194"/>
    </location>
</feature>
<feature type="region of interest" description="Disordered" evidence="3">
    <location>
        <begin position="605"/>
        <end position="627"/>
    </location>
</feature>
<feature type="compositionally biased region" description="Basic and acidic residues" evidence="3">
    <location>
        <begin position="74"/>
        <end position="93"/>
    </location>
</feature>
<feature type="compositionally biased region" description="Polar residues" evidence="3">
    <location>
        <begin position="107"/>
        <end position="124"/>
    </location>
</feature>
<feature type="compositionally biased region" description="Basic and acidic residues" evidence="3">
    <location>
        <begin position="136"/>
        <end position="151"/>
    </location>
</feature>
<feature type="modified residue" description="Phosphoserine" evidence="6">
    <location>
        <position position="80"/>
    </location>
</feature>
<feature type="modified residue" description="Phosphotyrosine" evidence="5">
    <location>
        <position position="343"/>
    </location>
</feature>
<feature type="modified residue" description="Phosphotyrosine" evidence="5">
    <location>
        <position position="511"/>
    </location>
</feature>
<feature type="cross-link" description="Glycyl lysine isopeptide (Lys-Gly) (interchain with G-Cter in SUMO2)" evidence="7">
    <location>
        <position position="425"/>
    </location>
</feature>
<feature type="sequence variant" id="VAR_052803" description="In dbSNP:rs2074858.">
    <original>R</original>
    <variation>T</variation>
    <location>
        <position position="181"/>
    </location>
</feature>
<feature type="sequence variant" id="VAR_052804" description="In dbSNP:rs917340.">
    <original>R</original>
    <variation>H</variation>
    <location>
        <position position="183"/>
    </location>
</feature>
<name>ZN264_HUMAN</name>
<comment type="function">
    <text>May be involved in transcriptional regulation.</text>
</comment>
<comment type="interaction">
    <interactant intactId="EBI-4395808">
        <id>O43296</id>
    </interactant>
    <interactant intactId="EBI-739624">
        <id>Q8NHQ1</id>
        <label>CEP70</label>
    </interactant>
    <organismsDiffer>false</organismsDiffer>
    <experiments>4</experiments>
</comment>
<comment type="interaction">
    <interactant intactId="EBI-4395808">
        <id>O43296</id>
    </interactant>
    <interactant intactId="EBI-739789">
        <id>Q92997</id>
        <label>DVL3</label>
    </interactant>
    <organismsDiffer>false</organismsDiffer>
    <experiments>3</experiments>
</comment>
<comment type="interaction">
    <interactant intactId="EBI-4395808">
        <id>O43296</id>
    </interactant>
    <interactant intactId="EBI-5916454">
        <id>A6NEM1</id>
        <label>GOLGA6L9</label>
    </interactant>
    <organismsDiffer>false</organismsDiffer>
    <experiments>3</experiments>
</comment>
<comment type="interaction">
    <interactant intactId="EBI-4395808">
        <id>O43296</id>
    </interactant>
    <interactant intactId="EBI-358808">
        <id>O15397</id>
        <label>IPO8</label>
    </interactant>
    <organismsDiffer>false</organismsDiffer>
    <experiments>3</experiments>
</comment>
<comment type="interaction">
    <interactant intactId="EBI-4395808">
        <id>O43296</id>
    </interactant>
    <interactant intactId="EBI-12012928">
        <id>P60371</id>
        <label>KRTAP10-6</label>
    </interactant>
    <organismsDiffer>false</organismsDiffer>
    <experiments>3</experiments>
</comment>
<comment type="interaction">
    <interactant intactId="EBI-4395808">
        <id>O43296</id>
    </interactant>
    <interactant intactId="EBI-10172290">
        <id>P60409</id>
        <label>KRTAP10-7</label>
    </interactant>
    <organismsDiffer>false</organismsDiffer>
    <experiments>3</experiments>
</comment>
<comment type="interaction">
    <interactant intactId="EBI-4395808">
        <id>O43296</id>
    </interactant>
    <interactant intactId="EBI-10171774">
        <id>P60410</id>
        <label>KRTAP10-8</label>
    </interactant>
    <organismsDiffer>false</organismsDiffer>
    <experiments>3</experiments>
</comment>
<comment type="interaction">
    <interactant intactId="EBI-4395808">
        <id>O43296</id>
    </interactant>
    <interactant intactId="EBI-14065470">
        <id>Q9BYR9</id>
        <label>KRTAP2-4</label>
    </interactant>
    <organismsDiffer>false</organismsDiffer>
    <experiments>3</experiments>
</comment>
<comment type="interaction">
    <interactant intactId="EBI-4395808">
        <id>O43296</id>
    </interactant>
    <interactant intactId="EBI-307531">
        <id>P23508</id>
        <label>MCC</label>
    </interactant>
    <organismsDiffer>false</organismsDiffer>
    <experiments>3</experiments>
</comment>
<comment type="interaction">
    <interactant intactId="EBI-4395808">
        <id>O43296</id>
    </interactant>
    <interactant intactId="EBI-724076">
        <id>Q99750</id>
        <label>MDFI</label>
    </interactant>
    <organismsDiffer>false</organismsDiffer>
    <experiments>3</experiments>
</comment>
<comment type="interaction">
    <interactant intactId="EBI-4395808">
        <id>O43296</id>
    </interactant>
    <interactant intactId="EBI-79165">
        <id>Q9NRD5</id>
        <label>PICK1</label>
    </interactant>
    <organismsDiffer>false</organismsDiffer>
    <experiments>3</experiments>
</comment>
<comment type="interaction">
    <interactant intactId="EBI-4395808">
        <id>O43296</id>
    </interactant>
    <interactant intactId="EBI-725997">
        <id>Q8WV44</id>
        <label>TRIM41</label>
    </interactant>
    <organismsDiffer>false</organismsDiffer>
    <experiments>5</experiments>
</comment>
<comment type="interaction">
    <interactant intactId="EBI-4395808">
        <id>O43296</id>
    </interactant>
    <interactant intactId="EBI-3438881">
        <id>Q9Y473</id>
        <label>ZNF175</label>
    </interactant>
    <organismsDiffer>false</organismsDiffer>
    <experiments>5</experiments>
</comment>
<comment type="interaction">
    <interactant intactId="EBI-4395808">
        <id>O43296</id>
    </interactant>
    <interactant intactId="EBI-11035148">
        <id>Q8TF50</id>
        <label>ZNF526</label>
    </interactant>
    <organismsDiffer>false</organismsDiffer>
    <experiments>3</experiments>
</comment>
<comment type="subcellular location">
    <subcellularLocation>
        <location evidence="4">Nucleus</location>
    </subcellularLocation>
</comment>
<comment type="tissue specificity">
    <text>Relatively highly expressed in kidney, thymus, testis, ovary, brain, lung, placenta, and prostate, and relatively low expression in heart, liver, skeletal muscle, pancreas, spleen, and small intestine.</text>
</comment>
<comment type="similarity">
    <text evidence="4">Belongs to the krueppel C2H2-type zinc-finger protein family.</text>
</comment>
<comment type="sequence caution" evidence="4">
    <conflict type="erroneous initiation">
        <sequence resource="EMBL-CDS" id="BAA24842"/>
    </conflict>
</comment>
<dbReference type="EMBL" id="AB007872">
    <property type="protein sequence ID" value="BAA24842.2"/>
    <property type="status" value="ALT_INIT"/>
    <property type="molecule type" value="mRNA"/>
</dbReference>
<dbReference type="EMBL" id="AK292504">
    <property type="protein sequence ID" value="BAF85193.1"/>
    <property type="molecule type" value="mRNA"/>
</dbReference>
<dbReference type="EMBL" id="AC005261">
    <property type="status" value="NOT_ANNOTATED_CDS"/>
    <property type="molecule type" value="Genomic_DNA"/>
</dbReference>
<dbReference type="EMBL" id="AC025588">
    <property type="protein sequence ID" value="AAF42766.1"/>
    <property type="molecule type" value="Genomic_DNA"/>
</dbReference>
<dbReference type="CCDS" id="CCDS33127.1"/>
<dbReference type="RefSeq" id="NP_003408.1">
    <property type="nucleotide sequence ID" value="NM_003417.5"/>
</dbReference>
<dbReference type="RefSeq" id="XP_047295680.1">
    <property type="nucleotide sequence ID" value="XM_047439724.1"/>
</dbReference>
<dbReference type="SMR" id="O43296"/>
<dbReference type="BioGRID" id="114815">
    <property type="interactions" value="42"/>
</dbReference>
<dbReference type="CORUM" id="O43296"/>
<dbReference type="FunCoup" id="O43296">
    <property type="interactions" value="159"/>
</dbReference>
<dbReference type="IntAct" id="O43296">
    <property type="interactions" value="29"/>
</dbReference>
<dbReference type="STRING" id="9606.ENSP00000263095"/>
<dbReference type="iPTMnet" id="O43296"/>
<dbReference type="PhosphoSitePlus" id="O43296"/>
<dbReference type="BioMuta" id="ZNF264"/>
<dbReference type="jPOST" id="O43296"/>
<dbReference type="MassIVE" id="O43296"/>
<dbReference type="PaxDb" id="9606-ENSP00000263095"/>
<dbReference type="PeptideAtlas" id="O43296"/>
<dbReference type="ProteomicsDB" id="48870"/>
<dbReference type="Pumba" id="O43296"/>
<dbReference type="Antibodypedia" id="19635">
    <property type="antibodies" value="146 antibodies from 19 providers"/>
</dbReference>
<dbReference type="DNASU" id="9422"/>
<dbReference type="Ensembl" id="ENST00000263095.10">
    <property type="protein sequence ID" value="ENSP00000263095.5"/>
    <property type="gene ID" value="ENSG00000083844.11"/>
</dbReference>
<dbReference type="GeneID" id="9422"/>
<dbReference type="KEGG" id="hsa:9422"/>
<dbReference type="MANE-Select" id="ENST00000263095.10">
    <property type="protein sequence ID" value="ENSP00000263095.5"/>
    <property type="RefSeq nucleotide sequence ID" value="NM_003417.5"/>
    <property type="RefSeq protein sequence ID" value="NP_003408.1"/>
</dbReference>
<dbReference type="UCSC" id="uc002qob.3">
    <property type="organism name" value="human"/>
</dbReference>
<dbReference type="AGR" id="HGNC:13057"/>
<dbReference type="CTD" id="9422"/>
<dbReference type="GeneCards" id="ZNF264"/>
<dbReference type="HGNC" id="HGNC:13057">
    <property type="gene designation" value="ZNF264"/>
</dbReference>
<dbReference type="HPA" id="ENSG00000083844">
    <property type="expression patterns" value="Low tissue specificity"/>
</dbReference>
<dbReference type="MIM" id="604668">
    <property type="type" value="gene"/>
</dbReference>
<dbReference type="neXtProt" id="NX_O43296"/>
<dbReference type="OpenTargets" id="ENSG00000083844"/>
<dbReference type="PharmGKB" id="PA37635"/>
<dbReference type="VEuPathDB" id="HostDB:ENSG00000083844"/>
<dbReference type="eggNOG" id="KOG1721">
    <property type="taxonomic scope" value="Eukaryota"/>
</dbReference>
<dbReference type="GeneTree" id="ENSGT00940000159953"/>
<dbReference type="HOGENOM" id="CLU_002678_44_5_1"/>
<dbReference type="InParanoid" id="O43296"/>
<dbReference type="OMA" id="TSCEPTL"/>
<dbReference type="OrthoDB" id="6591996at2759"/>
<dbReference type="PAN-GO" id="O43296">
    <property type="GO annotations" value="4 GO annotations based on evolutionary models"/>
</dbReference>
<dbReference type="PhylomeDB" id="O43296"/>
<dbReference type="TreeFam" id="TF341817"/>
<dbReference type="PathwayCommons" id="O43296"/>
<dbReference type="Reactome" id="R-HSA-212436">
    <property type="pathway name" value="Generic Transcription Pathway"/>
</dbReference>
<dbReference type="Reactome" id="R-HSA-9843940">
    <property type="pathway name" value="Regulation of endogenous retroelements by KRAB-ZFP proteins"/>
</dbReference>
<dbReference type="SignaLink" id="O43296"/>
<dbReference type="BioGRID-ORCS" id="9422">
    <property type="hits" value="8 hits in 1172 CRISPR screens"/>
</dbReference>
<dbReference type="ChiTaRS" id="ZNF264">
    <property type="organism name" value="human"/>
</dbReference>
<dbReference type="GeneWiki" id="ZNF264"/>
<dbReference type="GenomeRNAi" id="9422"/>
<dbReference type="Pharos" id="O43296">
    <property type="development level" value="Tdark"/>
</dbReference>
<dbReference type="PRO" id="PR:O43296"/>
<dbReference type="Proteomes" id="UP000005640">
    <property type="component" value="Chromosome 19"/>
</dbReference>
<dbReference type="RNAct" id="O43296">
    <property type="molecule type" value="protein"/>
</dbReference>
<dbReference type="Bgee" id="ENSG00000083844">
    <property type="expression patterns" value="Expressed in buccal mucosa cell and 190 other cell types or tissues"/>
</dbReference>
<dbReference type="ExpressionAtlas" id="O43296">
    <property type="expression patterns" value="baseline and differential"/>
</dbReference>
<dbReference type="GO" id="GO:0005634">
    <property type="term" value="C:nucleus"/>
    <property type="evidence" value="ECO:0000318"/>
    <property type="project" value="GO_Central"/>
</dbReference>
<dbReference type="GO" id="GO:0000981">
    <property type="term" value="F:DNA-binding transcription factor activity, RNA polymerase II-specific"/>
    <property type="evidence" value="ECO:0000318"/>
    <property type="project" value="GO_Central"/>
</dbReference>
<dbReference type="GO" id="GO:0000978">
    <property type="term" value="F:RNA polymerase II cis-regulatory region sequence-specific DNA binding"/>
    <property type="evidence" value="ECO:0000318"/>
    <property type="project" value="GO_Central"/>
</dbReference>
<dbReference type="GO" id="GO:0008270">
    <property type="term" value="F:zinc ion binding"/>
    <property type="evidence" value="ECO:0007669"/>
    <property type="project" value="UniProtKB-KW"/>
</dbReference>
<dbReference type="GO" id="GO:0006357">
    <property type="term" value="P:regulation of transcription by RNA polymerase II"/>
    <property type="evidence" value="ECO:0000318"/>
    <property type="project" value="GO_Central"/>
</dbReference>
<dbReference type="CDD" id="cd07765">
    <property type="entry name" value="KRAB_A-box"/>
    <property type="match status" value="1"/>
</dbReference>
<dbReference type="FunFam" id="3.30.160.60:FF:001494">
    <property type="entry name" value="zinc finger protein 10 isoform X2"/>
    <property type="match status" value="1"/>
</dbReference>
<dbReference type="FunFam" id="3.30.160.60:FF:000478">
    <property type="entry name" value="Zinc finger protein 133"/>
    <property type="match status" value="1"/>
</dbReference>
<dbReference type="FunFam" id="3.30.160.60:FF:000551">
    <property type="entry name" value="zinc finger protein 197 isoform X1"/>
    <property type="match status" value="1"/>
</dbReference>
<dbReference type="FunFam" id="3.30.160.60:FF:000380">
    <property type="entry name" value="zinc finger protein 2 isoform X2"/>
    <property type="match status" value="1"/>
</dbReference>
<dbReference type="FunFam" id="3.30.160.60:FF:001868">
    <property type="entry name" value="Zinc finger protein 264"/>
    <property type="match status" value="1"/>
</dbReference>
<dbReference type="FunFam" id="3.30.160.60:FF:000352">
    <property type="entry name" value="zinc finger protein 3 homolog"/>
    <property type="match status" value="1"/>
</dbReference>
<dbReference type="FunFam" id="3.30.160.60:FF:000561">
    <property type="entry name" value="Zinc finger protein 30 homolog"/>
    <property type="match status" value="1"/>
</dbReference>
<dbReference type="FunFam" id="3.30.160.60:FF:000087">
    <property type="entry name" value="Zinc finger protein 354B"/>
    <property type="match status" value="1"/>
</dbReference>
<dbReference type="FunFam" id="3.30.160.60:FF:000016">
    <property type="entry name" value="zinc finger protein 37 homolog"/>
    <property type="match status" value="1"/>
</dbReference>
<dbReference type="FunFam" id="3.30.160.60:FF:002254">
    <property type="entry name" value="Zinc finger protein 540"/>
    <property type="match status" value="1"/>
</dbReference>
<dbReference type="FunFam" id="3.30.160.60:FF:000011">
    <property type="entry name" value="zinc finger protein 615 isoform X1"/>
    <property type="match status" value="1"/>
</dbReference>
<dbReference type="FunFam" id="3.30.160.60:FF:000493">
    <property type="entry name" value="Zinc finger protein 805"/>
    <property type="match status" value="1"/>
</dbReference>
<dbReference type="FunFam" id="3.30.160.60:FF:000896">
    <property type="entry name" value="Zinc finger protein 805"/>
    <property type="match status" value="1"/>
</dbReference>
<dbReference type="Gene3D" id="6.10.140.140">
    <property type="match status" value="1"/>
</dbReference>
<dbReference type="Gene3D" id="3.30.160.60">
    <property type="entry name" value="Classic Zinc Finger"/>
    <property type="match status" value="13"/>
</dbReference>
<dbReference type="InterPro" id="IPR001909">
    <property type="entry name" value="KRAB"/>
</dbReference>
<dbReference type="InterPro" id="IPR036051">
    <property type="entry name" value="KRAB_dom_sf"/>
</dbReference>
<dbReference type="InterPro" id="IPR050758">
    <property type="entry name" value="Znf_C2H2-type"/>
</dbReference>
<dbReference type="InterPro" id="IPR036236">
    <property type="entry name" value="Znf_C2H2_sf"/>
</dbReference>
<dbReference type="InterPro" id="IPR013087">
    <property type="entry name" value="Znf_C2H2_type"/>
</dbReference>
<dbReference type="PANTHER" id="PTHR23234:SF8">
    <property type="entry name" value="C2H2-TYPE DOMAIN-CONTAINING PROTEIN"/>
    <property type="match status" value="1"/>
</dbReference>
<dbReference type="PANTHER" id="PTHR23234">
    <property type="entry name" value="ZNF44 PROTEIN"/>
    <property type="match status" value="1"/>
</dbReference>
<dbReference type="Pfam" id="PF01352">
    <property type="entry name" value="KRAB"/>
    <property type="match status" value="1"/>
</dbReference>
<dbReference type="Pfam" id="PF00096">
    <property type="entry name" value="zf-C2H2"/>
    <property type="match status" value="12"/>
</dbReference>
<dbReference type="SMART" id="SM00349">
    <property type="entry name" value="KRAB"/>
    <property type="match status" value="1"/>
</dbReference>
<dbReference type="SMART" id="SM00355">
    <property type="entry name" value="ZnF_C2H2"/>
    <property type="match status" value="13"/>
</dbReference>
<dbReference type="SUPFAM" id="SSF57667">
    <property type="entry name" value="beta-beta-alpha zinc fingers"/>
    <property type="match status" value="7"/>
</dbReference>
<dbReference type="SUPFAM" id="SSF109640">
    <property type="entry name" value="KRAB domain (Kruppel-associated box)"/>
    <property type="match status" value="1"/>
</dbReference>
<dbReference type="PROSITE" id="PS50805">
    <property type="entry name" value="KRAB"/>
    <property type="match status" value="1"/>
</dbReference>
<dbReference type="PROSITE" id="PS00028">
    <property type="entry name" value="ZINC_FINGER_C2H2_1"/>
    <property type="match status" value="13"/>
</dbReference>
<dbReference type="PROSITE" id="PS50157">
    <property type="entry name" value="ZINC_FINGER_C2H2_2"/>
    <property type="match status" value="13"/>
</dbReference>
<accession>O43296</accession>
<accession>A8K8Y9</accession>
<accession>Q9P1V0</accession>
<sequence>MAAAVLTDRAQVSVTFDDVAVTFTKEEWGQLDLAQRTLYQEVMLENCGLLVSLGCPVPKAELICHLEHGQEPWTRKEDLSQDTCPGDKGKPKTTEPTTCEPALSEGISLQGQVTQGNSVDSQLGQAEDQDGLSEMQEGHFRPGIDPQEKSPGKMSPECDGLGTADGVCSRIGQEQVSPGDRVRSHNSCESGKDPMIQEEENNFKCSECGKVFNKKHLLAGHEKIHSGVKPYECTECGKTFIKSTHLLQHHMIHTGERPYECMECGKAFNRKSYLTQHQRIHSGEKPYKCNECGKAFTHRSNFVLHNRRHTGEKSFVCTECGQVFRHRPGFLRHYVVHSGENPYECLECGKVFKHRSYLMWHQQTHTGEKPYECSECGKVFLESAALIHHYVIHTGEKPFECLECGKAFNHRSYLKRHQRIHTGEKPFVCSECGKAFTHCSTFILHKRAHTGEKPFECKECGKAFSNRKDLIRHFSIHTGEKPYECVECGKAFTRMSGLTRHKRIHSGEKPYECVECGKSFCWSTNLIRHAIIHTGEKPYKCSECGKAFSRSSSLTQHQRMHTGKNPISVTDVGRPFTSGQTSVTLRELLLGKDFLNVTTEANILPEETSSSASDQPYQRETPQVSSL</sequence>
<evidence type="ECO:0000255" key="1">
    <source>
        <dbReference type="PROSITE-ProRule" id="PRU00042"/>
    </source>
</evidence>
<evidence type="ECO:0000255" key="2">
    <source>
        <dbReference type="PROSITE-ProRule" id="PRU00119"/>
    </source>
</evidence>
<evidence type="ECO:0000256" key="3">
    <source>
        <dbReference type="SAM" id="MobiDB-lite"/>
    </source>
</evidence>
<evidence type="ECO:0000305" key="4"/>
<evidence type="ECO:0007744" key="5">
    <source>
    </source>
</evidence>
<evidence type="ECO:0007744" key="6">
    <source>
    </source>
</evidence>
<evidence type="ECO:0007744" key="7">
    <source>
    </source>
</evidence>
<organism>
    <name type="scientific">Homo sapiens</name>
    <name type="common">Human</name>
    <dbReference type="NCBI Taxonomy" id="9606"/>
    <lineage>
        <taxon>Eukaryota</taxon>
        <taxon>Metazoa</taxon>
        <taxon>Chordata</taxon>
        <taxon>Craniata</taxon>
        <taxon>Vertebrata</taxon>
        <taxon>Euteleostomi</taxon>
        <taxon>Mammalia</taxon>
        <taxon>Eutheria</taxon>
        <taxon>Euarchontoglires</taxon>
        <taxon>Primates</taxon>
        <taxon>Haplorrhini</taxon>
        <taxon>Catarrhini</taxon>
        <taxon>Hominidae</taxon>
        <taxon>Homo</taxon>
    </lineage>
</organism>
<reference key="1">
    <citation type="journal article" date="1997" name="DNA Res.">
        <title>Prediction of the coding sequences of unidentified human genes. VIII. 78 new cDNA clones from brain which code for large proteins in vitro.</title>
        <authorList>
            <person name="Ishikawa K."/>
            <person name="Nagase T."/>
            <person name="Nakajima D."/>
            <person name="Seki N."/>
            <person name="Ohira M."/>
            <person name="Miyajima N."/>
            <person name="Tanaka A."/>
            <person name="Kotani H."/>
            <person name="Nomura N."/>
            <person name="Ohara O."/>
        </authorList>
    </citation>
    <scope>NUCLEOTIDE SEQUENCE [LARGE SCALE MRNA]</scope>
    <source>
        <tissue>Brain</tissue>
    </source>
</reference>
<reference key="2">
    <citation type="journal article" date="2004" name="Nat. Genet.">
        <title>Complete sequencing and characterization of 21,243 full-length human cDNAs.</title>
        <authorList>
            <person name="Ota T."/>
            <person name="Suzuki Y."/>
            <person name="Nishikawa T."/>
            <person name="Otsuki T."/>
            <person name="Sugiyama T."/>
            <person name="Irie R."/>
            <person name="Wakamatsu A."/>
            <person name="Hayashi K."/>
            <person name="Sato H."/>
            <person name="Nagai K."/>
            <person name="Kimura K."/>
            <person name="Makita H."/>
            <person name="Sekine M."/>
            <person name="Obayashi M."/>
            <person name="Nishi T."/>
            <person name="Shibahara T."/>
            <person name="Tanaka T."/>
            <person name="Ishii S."/>
            <person name="Yamamoto J."/>
            <person name="Saito K."/>
            <person name="Kawai Y."/>
            <person name="Isono Y."/>
            <person name="Nakamura Y."/>
            <person name="Nagahari K."/>
            <person name="Murakami K."/>
            <person name="Yasuda T."/>
            <person name="Iwayanagi T."/>
            <person name="Wagatsuma M."/>
            <person name="Shiratori A."/>
            <person name="Sudo H."/>
            <person name="Hosoiri T."/>
            <person name="Kaku Y."/>
            <person name="Kodaira H."/>
            <person name="Kondo H."/>
            <person name="Sugawara M."/>
            <person name="Takahashi M."/>
            <person name="Kanda K."/>
            <person name="Yokoi T."/>
            <person name="Furuya T."/>
            <person name="Kikkawa E."/>
            <person name="Omura Y."/>
            <person name="Abe K."/>
            <person name="Kamihara K."/>
            <person name="Katsuta N."/>
            <person name="Sato K."/>
            <person name="Tanikawa M."/>
            <person name="Yamazaki M."/>
            <person name="Ninomiya K."/>
            <person name="Ishibashi T."/>
            <person name="Yamashita H."/>
            <person name="Murakawa K."/>
            <person name="Fujimori K."/>
            <person name="Tanai H."/>
            <person name="Kimata M."/>
            <person name="Watanabe M."/>
            <person name="Hiraoka S."/>
            <person name="Chiba Y."/>
            <person name="Ishida S."/>
            <person name="Ono Y."/>
            <person name="Takiguchi S."/>
            <person name="Watanabe S."/>
            <person name="Yosida M."/>
            <person name="Hotuta T."/>
            <person name="Kusano J."/>
            <person name="Kanehori K."/>
            <person name="Takahashi-Fujii A."/>
            <person name="Hara H."/>
            <person name="Tanase T.-O."/>
            <person name="Nomura Y."/>
            <person name="Togiya S."/>
            <person name="Komai F."/>
            <person name="Hara R."/>
            <person name="Takeuchi K."/>
            <person name="Arita M."/>
            <person name="Imose N."/>
            <person name="Musashino K."/>
            <person name="Yuuki H."/>
            <person name="Oshima A."/>
            <person name="Sasaki N."/>
            <person name="Aotsuka S."/>
            <person name="Yoshikawa Y."/>
            <person name="Matsunawa H."/>
            <person name="Ichihara T."/>
            <person name="Shiohata N."/>
            <person name="Sano S."/>
            <person name="Moriya S."/>
            <person name="Momiyama H."/>
            <person name="Satoh N."/>
            <person name="Takami S."/>
            <person name="Terashima Y."/>
            <person name="Suzuki O."/>
            <person name="Nakagawa S."/>
            <person name="Senoh A."/>
            <person name="Mizoguchi H."/>
            <person name="Goto Y."/>
            <person name="Shimizu F."/>
            <person name="Wakebe H."/>
            <person name="Hishigaki H."/>
            <person name="Watanabe T."/>
            <person name="Sugiyama A."/>
            <person name="Takemoto M."/>
            <person name="Kawakami B."/>
            <person name="Yamazaki M."/>
            <person name="Watanabe K."/>
            <person name="Kumagai A."/>
            <person name="Itakura S."/>
            <person name="Fukuzumi Y."/>
            <person name="Fujimori Y."/>
            <person name="Komiyama M."/>
            <person name="Tashiro H."/>
            <person name="Tanigami A."/>
            <person name="Fujiwara T."/>
            <person name="Ono T."/>
            <person name="Yamada K."/>
            <person name="Fujii Y."/>
            <person name="Ozaki K."/>
            <person name="Hirao M."/>
            <person name="Ohmori Y."/>
            <person name="Kawabata A."/>
            <person name="Hikiji T."/>
            <person name="Kobatake N."/>
            <person name="Inagaki H."/>
            <person name="Ikema Y."/>
            <person name="Okamoto S."/>
            <person name="Okitani R."/>
            <person name="Kawakami T."/>
            <person name="Noguchi S."/>
            <person name="Itoh T."/>
            <person name="Shigeta K."/>
            <person name="Senba T."/>
            <person name="Matsumura K."/>
            <person name="Nakajima Y."/>
            <person name="Mizuno T."/>
            <person name="Morinaga M."/>
            <person name="Sasaki M."/>
            <person name="Togashi T."/>
            <person name="Oyama M."/>
            <person name="Hata H."/>
            <person name="Watanabe M."/>
            <person name="Komatsu T."/>
            <person name="Mizushima-Sugano J."/>
            <person name="Satoh T."/>
            <person name="Shirai Y."/>
            <person name="Takahashi Y."/>
            <person name="Nakagawa K."/>
            <person name="Okumura K."/>
            <person name="Nagase T."/>
            <person name="Nomura N."/>
            <person name="Kikuchi H."/>
            <person name="Masuho Y."/>
            <person name="Yamashita R."/>
            <person name="Nakai K."/>
            <person name="Yada T."/>
            <person name="Nakamura Y."/>
            <person name="Ohara O."/>
            <person name="Isogai T."/>
            <person name="Sugano S."/>
        </authorList>
    </citation>
    <scope>NUCLEOTIDE SEQUENCE [LARGE SCALE MRNA]</scope>
    <source>
        <tissue>Testis</tissue>
    </source>
</reference>
<reference key="3">
    <citation type="journal article" date="2004" name="Nature">
        <title>The DNA sequence and biology of human chromosome 19.</title>
        <authorList>
            <person name="Grimwood J."/>
            <person name="Gordon L.A."/>
            <person name="Olsen A.S."/>
            <person name="Terry A."/>
            <person name="Schmutz J."/>
            <person name="Lamerdin J.E."/>
            <person name="Hellsten U."/>
            <person name="Goodstein D."/>
            <person name="Couronne O."/>
            <person name="Tran-Gyamfi M."/>
            <person name="Aerts A."/>
            <person name="Altherr M."/>
            <person name="Ashworth L."/>
            <person name="Bajorek E."/>
            <person name="Black S."/>
            <person name="Branscomb E."/>
            <person name="Caenepeel S."/>
            <person name="Carrano A.V."/>
            <person name="Caoile C."/>
            <person name="Chan Y.M."/>
            <person name="Christensen M."/>
            <person name="Cleland C.A."/>
            <person name="Copeland A."/>
            <person name="Dalin E."/>
            <person name="Dehal P."/>
            <person name="Denys M."/>
            <person name="Detter J.C."/>
            <person name="Escobar J."/>
            <person name="Flowers D."/>
            <person name="Fotopulos D."/>
            <person name="Garcia C."/>
            <person name="Georgescu A.M."/>
            <person name="Glavina T."/>
            <person name="Gomez M."/>
            <person name="Gonzales E."/>
            <person name="Groza M."/>
            <person name="Hammon N."/>
            <person name="Hawkins T."/>
            <person name="Haydu L."/>
            <person name="Ho I."/>
            <person name="Huang W."/>
            <person name="Israni S."/>
            <person name="Jett J."/>
            <person name="Kadner K."/>
            <person name="Kimball H."/>
            <person name="Kobayashi A."/>
            <person name="Larionov V."/>
            <person name="Leem S.-H."/>
            <person name="Lopez F."/>
            <person name="Lou Y."/>
            <person name="Lowry S."/>
            <person name="Malfatti S."/>
            <person name="Martinez D."/>
            <person name="McCready P.M."/>
            <person name="Medina C."/>
            <person name="Morgan J."/>
            <person name="Nelson K."/>
            <person name="Nolan M."/>
            <person name="Ovcharenko I."/>
            <person name="Pitluck S."/>
            <person name="Pollard M."/>
            <person name="Popkie A.P."/>
            <person name="Predki P."/>
            <person name="Quan G."/>
            <person name="Ramirez L."/>
            <person name="Rash S."/>
            <person name="Retterer J."/>
            <person name="Rodriguez A."/>
            <person name="Rogers S."/>
            <person name="Salamov A."/>
            <person name="Salazar A."/>
            <person name="She X."/>
            <person name="Smith D."/>
            <person name="Slezak T."/>
            <person name="Solovyev V."/>
            <person name="Thayer N."/>
            <person name="Tice H."/>
            <person name="Tsai M."/>
            <person name="Ustaszewska A."/>
            <person name="Vo N."/>
            <person name="Wagner M."/>
            <person name="Wheeler J."/>
            <person name="Wu K."/>
            <person name="Xie G."/>
            <person name="Yang J."/>
            <person name="Dubchak I."/>
            <person name="Furey T.S."/>
            <person name="DeJong P."/>
            <person name="Dickson M."/>
            <person name="Gordon D."/>
            <person name="Eichler E.E."/>
            <person name="Pennacchio L.A."/>
            <person name="Richardson P."/>
            <person name="Stubbs L."/>
            <person name="Rokhsar D.S."/>
            <person name="Myers R.M."/>
            <person name="Rubin E.M."/>
            <person name="Lucas S.M."/>
        </authorList>
    </citation>
    <scope>NUCLEOTIDE SEQUENCE [LARGE SCALE GENOMIC DNA]</scope>
</reference>
<reference key="4">
    <citation type="journal article" date="2005" name="Nat. Biotechnol.">
        <title>Immunoaffinity profiling of tyrosine phosphorylation in cancer cells.</title>
        <authorList>
            <person name="Rush J."/>
            <person name="Moritz A."/>
            <person name="Lee K.A."/>
            <person name="Guo A."/>
            <person name="Goss V.L."/>
            <person name="Spek E.J."/>
            <person name="Zhang H."/>
            <person name="Zha X.-M."/>
            <person name="Polakiewicz R.D."/>
            <person name="Comb M.J."/>
        </authorList>
    </citation>
    <scope>PHOSPHORYLATION [LARGE SCALE ANALYSIS] AT TYR-343 AND TYR-511</scope>
    <scope>IDENTIFICATION BY MASS SPECTROMETRY [LARGE SCALE ANALYSIS]</scope>
</reference>
<reference key="5">
    <citation type="journal article" date="2007" name="Science">
        <title>ATM and ATR substrate analysis reveals extensive protein networks responsive to DNA damage.</title>
        <authorList>
            <person name="Matsuoka S."/>
            <person name="Ballif B.A."/>
            <person name="Smogorzewska A."/>
            <person name="McDonald E.R. III"/>
            <person name="Hurov K.E."/>
            <person name="Luo J."/>
            <person name="Bakalarski C.E."/>
            <person name="Zhao Z."/>
            <person name="Solimini N."/>
            <person name="Lerenthal Y."/>
            <person name="Shiloh Y."/>
            <person name="Gygi S.P."/>
            <person name="Elledge S.J."/>
        </authorList>
    </citation>
    <scope>PHOSPHORYLATION [LARGE SCALE ANALYSIS] AT SER-80</scope>
    <scope>IDENTIFICATION BY MASS SPECTROMETRY [LARGE SCALE ANALYSIS]</scope>
    <source>
        <tissue>Embryonic kidney</tissue>
    </source>
</reference>
<reference key="6">
    <citation type="journal article" date="2008" name="Proc. Natl. Acad. Sci. U.S.A.">
        <title>A quantitative atlas of mitotic phosphorylation.</title>
        <authorList>
            <person name="Dephoure N."/>
            <person name="Zhou C."/>
            <person name="Villen J."/>
            <person name="Beausoleil S.A."/>
            <person name="Bakalarski C.E."/>
            <person name="Elledge S.J."/>
            <person name="Gygi S.P."/>
        </authorList>
    </citation>
    <scope>IDENTIFICATION BY MASS SPECTROMETRY [LARGE SCALE ANALYSIS]</scope>
    <source>
        <tissue>Cervix carcinoma</tissue>
    </source>
</reference>
<reference key="7">
    <citation type="journal article" date="2017" name="Nat. Struct. Mol. Biol.">
        <title>Site-specific mapping of the human SUMO proteome reveals co-modification with phosphorylation.</title>
        <authorList>
            <person name="Hendriks I.A."/>
            <person name="Lyon D."/>
            <person name="Young C."/>
            <person name="Jensen L.J."/>
            <person name="Vertegaal A.C."/>
            <person name="Nielsen M.L."/>
        </authorList>
    </citation>
    <scope>SUMOYLATION [LARGE SCALE ANALYSIS] AT LYS-425</scope>
    <scope>IDENTIFICATION BY MASS SPECTROMETRY [LARGE SCALE ANALYSIS]</scope>
</reference>